<comment type="function">
    <text evidence="1">Central component of the receptor complex responsible for the recognition and translocation of cytosolically synthesized mitochondrial preproteins. Together with TOM20 functions as the transit peptide receptor at the surface of the mitochondrion outer membrane and facilitates the movement of preproteins into the translocation pore (By similarity).</text>
</comment>
<comment type="subunit">
    <text>Forms part of the preprotein translocase complex of the outer mitochondrial membrane (TOM complex) which consists of at least 6 different proteins (TOM5, TOM6, TOM7, TOM20, TOM22/TOM9 and TOM40).</text>
</comment>
<comment type="subcellular location">
    <subcellularLocation>
        <location evidence="1">Mitochondrion outer membrane</location>
        <topology evidence="1">Single-pass type II membrane protein</topology>
    </subcellularLocation>
</comment>
<comment type="tissue specificity">
    <text evidence="3">Expressed in roots, flowers, young cotyledons and leaves.</text>
</comment>
<comment type="similarity">
    <text evidence="4">Belongs to the Tom22 family.</text>
</comment>
<feature type="chain" id="PRO_0000076109" description="Mitochondrial import receptor subunit TOM9-1">
    <location>
        <begin position="1"/>
        <end position="94"/>
    </location>
</feature>
<feature type="topological domain" description="Cytoplasmic" evidence="2">
    <location>
        <begin position="1"/>
        <end position="48"/>
    </location>
</feature>
<feature type="transmembrane region" description="Helical" evidence="2">
    <location>
        <begin position="49"/>
        <end position="66"/>
    </location>
</feature>
<feature type="topological domain" description="Mitochondrial intermembrane" evidence="2">
    <location>
        <begin position="67"/>
        <end position="94"/>
    </location>
</feature>
<dbReference type="EMBL" id="AC002411">
    <property type="protein sequence ID" value="AAC16747.1"/>
    <property type="molecule type" value="Genomic_DNA"/>
</dbReference>
<dbReference type="EMBL" id="CP002684">
    <property type="protein sequence ID" value="AEE27651.1"/>
    <property type="molecule type" value="Genomic_DNA"/>
</dbReference>
<dbReference type="EMBL" id="AY086260">
    <property type="protein sequence ID" value="AAM64333.1"/>
    <property type="molecule type" value="mRNA"/>
</dbReference>
<dbReference type="EMBL" id="AK175541">
    <property type="protein sequence ID" value="BAD43304.1"/>
    <property type="molecule type" value="mRNA"/>
</dbReference>
<dbReference type="PIR" id="T00965">
    <property type="entry name" value="T00965"/>
</dbReference>
<dbReference type="RefSeq" id="NP_563699.1">
    <property type="nucleotide sequence ID" value="NM_100288.3"/>
</dbReference>
<dbReference type="SMR" id="O64497"/>
<dbReference type="FunCoup" id="O64497">
    <property type="interactions" value="2183"/>
</dbReference>
<dbReference type="STRING" id="3702.O64497"/>
<dbReference type="SwissPalm" id="O64497"/>
<dbReference type="PaxDb" id="3702-AT1G04070.1"/>
<dbReference type="EnsemblPlants" id="AT1G04070.1">
    <property type="protein sequence ID" value="AT1G04070.1"/>
    <property type="gene ID" value="AT1G04070"/>
</dbReference>
<dbReference type="GeneID" id="839317"/>
<dbReference type="Gramene" id="AT1G04070.1">
    <property type="protein sequence ID" value="AT1G04070.1"/>
    <property type="gene ID" value="AT1G04070"/>
</dbReference>
<dbReference type="KEGG" id="ath:AT1G04070"/>
<dbReference type="Araport" id="AT1G04070"/>
<dbReference type="TAIR" id="AT1G04070">
    <property type="gene designation" value="TOM22-I"/>
</dbReference>
<dbReference type="eggNOG" id="KOG4111">
    <property type="taxonomic scope" value="Eukaryota"/>
</dbReference>
<dbReference type="HOGENOM" id="CLU_172840_0_0_1"/>
<dbReference type="InParanoid" id="O64497"/>
<dbReference type="OMA" id="ESHIVSY"/>
<dbReference type="OrthoDB" id="10016939at2759"/>
<dbReference type="PhylomeDB" id="O64497"/>
<dbReference type="PRO" id="PR:O64497"/>
<dbReference type="Proteomes" id="UP000006548">
    <property type="component" value="Chromosome 1"/>
</dbReference>
<dbReference type="ExpressionAtlas" id="O64497">
    <property type="expression patterns" value="baseline and differential"/>
</dbReference>
<dbReference type="GO" id="GO:0005742">
    <property type="term" value="C:mitochondrial outer membrane translocase complex"/>
    <property type="evidence" value="ECO:0000250"/>
    <property type="project" value="TAIR"/>
</dbReference>
<dbReference type="GO" id="GO:0015450">
    <property type="term" value="F:protein-transporting ATPase activity"/>
    <property type="evidence" value="ECO:0000250"/>
    <property type="project" value="TAIR"/>
</dbReference>
<dbReference type="GO" id="GO:0006626">
    <property type="term" value="P:protein targeting to mitochondrion"/>
    <property type="evidence" value="ECO:0000250"/>
    <property type="project" value="TAIR"/>
</dbReference>
<dbReference type="CDD" id="cd22884">
    <property type="entry name" value="TOM22"/>
    <property type="match status" value="1"/>
</dbReference>
<dbReference type="InterPro" id="IPR017411">
    <property type="entry name" value="Tom22_pln"/>
</dbReference>
<dbReference type="PANTHER" id="PTHR46867:SF3">
    <property type="entry name" value="MITOCHONDRIAL IMPORT RECEPTOR SUBUNIT TOM9-1"/>
    <property type="match status" value="1"/>
</dbReference>
<dbReference type="PANTHER" id="PTHR46867">
    <property type="entry name" value="MITOCHONDRIAL IMPORT RECEPTOR SUBUNIT TOM9-2"/>
    <property type="match status" value="1"/>
</dbReference>
<dbReference type="PIRSF" id="PIRSF038151">
    <property type="entry name" value="TOM9-2_plant"/>
    <property type="match status" value="1"/>
</dbReference>
<proteinExistence type="evidence at transcript level"/>
<reference key="1">
    <citation type="journal article" date="2000" name="Nature">
        <title>Sequence and analysis of chromosome 1 of the plant Arabidopsis thaliana.</title>
        <authorList>
            <person name="Theologis A."/>
            <person name="Ecker J.R."/>
            <person name="Palm C.J."/>
            <person name="Federspiel N.A."/>
            <person name="Kaul S."/>
            <person name="White O."/>
            <person name="Alonso J."/>
            <person name="Altafi H."/>
            <person name="Araujo R."/>
            <person name="Bowman C.L."/>
            <person name="Brooks S.Y."/>
            <person name="Buehler E."/>
            <person name="Chan A."/>
            <person name="Chao Q."/>
            <person name="Chen H."/>
            <person name="Cheuk R.F."/>
            <person name="Chin C.W."/>
            <person name="Chung M.K."/>
            <person name="Conn L."/>
            <person name="Conway A.B."/>
            <person name="Conway A.R."/>
            <person name="Creasy T.H."/>
            <person name="Dewar K."/>
            <person name="Dunn P."/>
            <person name="Etgu P."/>
            <person name="Feldblyum T.V."/>
            <person name="Feng J.-D."/>
            <person name="Fong B."/>
            <person name="Fujii C.Y."/>
            <person name="Gill J.E."/>
            <person name="Goldsmith A.D."/>
            <person name="Haas B."/>
            <person name="Hansen N.F."/>
            <person name="Hughes B."/>
            <person name="Huizar L."/>
            <person name="Hunter J.L."/>
            <person name="Jenkins J."/>
            <person name="Johnson-Hopson C."/>
            <person name="Khan S."/>
            <person name="Khaykin E."/>
            <person name="Kim C.J."/>
            <person name="Koo H.L."/>
            <person name="Kremenetskaia I."/>
            <person name="Kurtz D.B."/>
            <person name="Kwan A."/>
            <person name="Lam B."/>
            <person name="Langin-Hooper S."/>
            <person name="Lee A."/>
            <person name="Lee J.M."/>
            <person name="Lenz C.A."/>
            <person name="Li J.H."/>
            <person name="Li Y.-P."/>
            <person name="Lin X."/>
            <person name="Liu S.X."/>
            <person name="Liu Z.A."/>
            <person name="Luros J.S."/>
            <person name="Maiti R."/>
            <person name="Marziali A."/>
            <person name="Militscher J."/>
            <person name="Miranda M."/>
            <person name="Nguyen M."/>
            <person name="Nierman W.C."/>
            <person name="Osborne B.I."/>
            <person name="Pai G."/>
            <person name="Peterson J."/>
            <person name="Pham P.K."/>
            <person name="Rizzo M."/>
            <person name="Rooney T."/>
            <person name="Rowley D."/>
            <person name="Sakano H."/>
            <person name="Salzberg S.L."/>
            <person name="Schwartz J.R."/>
            <person name="Shinn P."/>
            <person name="Southwick A.M."/>
            <person name="Sun H."/>
            <person name="Tallon L.J."/>
            <person name="Tambunga G."/>
            <person name="Toriumi M.J."/>
            <person name="Town C.D."/>
            <person name="Utterback T."/>
            <person name="Van Aken S."/>
            <person name="Vaysberg M."/>
            <person name="Vysotskaia V.S."/>
            <person name="Walker M."/>
            <person name="Wu D."/>
            <person name="Yu G."/>
            <person name="Fraser C.M."/>
            <person name="Venter J.C."/>
            <person name="Davis R.W."/>
        </authorList>
    </citation>
    <scope>NUCLEOTIDE SEQUENCE [LARGE SCALE GENOMIC DNA]</scope>
    <source>
        <strain>cv. Columbia</strain>
    </source>
</reference>
<reference key="2">
    <citation type="journal article" date="2017" name="Plant J.">
        <title>Araport11: a complete reannotation of the Arabidopsis thaliana reference genome.</title>
        <authorList>
            <person name="Cheng C.Y."/>
            <person name="Krishnakumar V."/>
            <person name="Chan A.P."/>
            <person name="Thibaud-Nissen F."/>
            <person name="Schobel S."/>
            <person name="Town C.D."/>
        </authorList>
    </citation>
    <scope>GENOME REANNOTATION</scope>
    <source>
        <strain>cv. Columbia</strain>
    </source>
</reference>
<reference key="3">
    <citation type="submission" date="2002-03" db="EMBL/GenBank/DDBJ databases">
        <title>Full-length cDNA from Arabidopsis thaliana.</title>
        <authorList>
            <person name="Brover V.V."/>
            <person name="Troukhan M.E."/>
            <person name="Alexandrov N.A."/>
            <person name="Lu Y.-P."/>
            <person name="Flavell R.B."/>
            <person name="Feldmann K.A."/>
        </authorList>
    </citation>
    <scope>NUCLEOTIDE SEQUENCE [LARGE SCALE MRNA]</scope>
</reference>
<reference key="4">
    <citation type="submission" date="2004-09" db="EMBL/GenBank/DDBJ databases">
        <title>Large-scale analysis of RIKEN Arabidopsis full-length (RAFL) cDNAs.</title>
        <authorList>
            <person name="Totoki Y."/>
            <person name="Seki M."/>
            <person name="Ishida J."/>
            <person name="Nakajima M."/>
            <person name="Enju A."/>
            <person name="Kamiya A."/>
            <person name="Narusaka M."/>
            <person name="Shin-i T."/>
            <person name="Nakagawa M."/>
            <person name="Sakamoto N."/>
            <person name="Oishi K."/>
            <person name="Kohara Y."/>
            <person name="Kobayashi M."/>
            <person name="Toyoda A."/>
            <person name="Sakaki Y."/>
            <person name="Sakurai T."/>
            <person name="Iida K."/>
            <person name="Akiyama K."/>
            <person name="Satou M."/>
            <person name="Toyoda T."/>
            <person name="Konagaya A."/>
            <person name="Carninci P."/>
            <person name="Kawai J."/>
            <person name="Hayashizaki Y."/>
            <person name="Shinozaki K."/>
        </authorList>
    </citation>
    <scope>NUCLEOTIDE SEQUENCE [LARGE SCALE MRNA]</scope>
    <source>
        <strain>cv. Columbia</strain>
    </source>
</reference>
<reference key="5">
    <citation type="journal article" date="2004" name="Plant Physiol.">
        <title>A transcriptomic and proteomic characterization of the Arabidopsis mitochondrial protein import apparatus and its response to mitochondrial dysfunction.</title>
        <authorList>
            <person name="Lister R."/>
            <person name="Chew O."/>
            <person name="Lee M.N."/>
            <person name="Heazlewood J.L."/>
            <person name="Clifton R."/>
            <person name="Parker K.L."/>
            <person name="Millar A.H."/>
            <person name="Whelan J."/>
        </authorList>
    </citation>
    <scope>TISSUE SPECIFICITY</scope>
</reference>
<gene>
    <name type="primary">TOM9-1</name>
    <name type="synonym">TOM22-1</name>
    <name type="ordered locus">At1g04070</name>
    <name type="ORF">F20D22.15</name>
</gene>
<accession>O64497</accession>
<sequence>MAPKKIGAGKGDSSILAKISNYDIVSQGRRAACDAVYVSKKLLKSTGKAAWIAGTTFLILAVPLILELEQDHRLGEIDFEQASLLGTPPVGAML</sequence>
<keyword id="KW-0472">Membrane</keyword>
<keyword id="KW-0496">Mitochondrion</keyword>
<keyword id="KW-1000">Mitochondrion outer membrane</keyword>
<keyword id="KW-0653">Protein transport</keyword>
<keyword id="KW-0675">Receptor</keyword>
<keyword id="KW-1185">Reference proteome</keyword>
<keyword id="KW-0735">Signal-anchor</keyword>
<keyword id="KW-0811">Translocation</keyword>
<keyword id="KW-0812">Transmembrane</keyword>
<keyword id="KW-1133">Transmembrane helix</keyword>
<keyword id="KW-0813">Transport</keyword>
<evidence type="ECO:0000250" key="1"/>
<evidence type="ECO:0000255" key="2"/>
<evidence type="ECO:0000269" key="3">
    <source>
    </source>
</evidence>
<evidence type="ECO:0000305" key="4"/>
<organism>
    <name type="scientific">Arabidopsis thaliana</name>
    <name type="common">Mouse-ear cress</name>
    <dbReference type="NCBI Taxonomy" id="3702"/>
    <lineage>
        <taxon>Eukaryota</taxon>
        <taxon>Viridiplantae</taxon>
        <taxon>Streptophyta</taxon>
        <taxon>Embryophyta</taxon>
        <taxon>Tracheophyta</taxon>
        <taxon>Spermatophyta</taxon>
        <taxon>Magnoliopsida</taxon>
        <taxon>eudicotyledons</taxon>
        <taxon>Gunneridae</taxon>
        <taxon>Pentapetalae</taxon>
        <taxon>rosids</taxon>
        <taxon>malvids</taxon>
        <taxon>Brassicales</taxon>
        <taxon>Brassicaceae</taxon>
        <taxon>Camelineae</taxon>
        <taxon>Arabidopsis</taxon>
    </lineage>
</organism>
<protein>
    <recommendedName>
        <fullName>Mitochondrial import receptor subunit TOM9-1</fullName>
    </recommendedName>
    <alternativeName>
        <fullName>Mitochondrial import receptor subunit TOM22 homolog 1</fullName>
    </alternativeName>
    <alternativeName>
        <fullName>Translocase of outer membrane 22 kDa subunit homolog 1</fullName>
    </alternativeName>
    <alternativeName>
        <fullName>Translocase of outer membrane 9 kDa subunit TOM9-1</fullName>
    </alternativeName>
</protein>
<name>TOM91_ARATH</name>